<sequence length="192" mass="21489">MKIRNATFYKSVSAIDHLPKEQLPEIVFVGRSNVGKSTLLNSLTARKGLAKTSSTPGKTQLINYFVINESCYFVDLPGYGYAKVDKGKKYEWGKLLSHYVSTRDSITLVVLLIDSRHPDMESDHLMAEFLEHCGRPYGVVLTKYDKLKQQAKAAARLAVKSYSLKSKFIVNYSAISGQGKEELLEQLAIYTG</sequence>
<feature type="chain" id="PRO_1000115962" description="Probable GTP-binding protein EngB">
    <location>
        <begin position="1"/>
        <end position="192"/>
    </location>
</feature>
<feature type="domain" description="EngB-type G" evidence="1">
    <location>
        <begin position="22"/>
        <end position="192"/>
    </location>
</feature>
<feature type="binding site" evidence="1">
    <location>
        <begin position="30"/>
        <end position="37"/>
    </location>
    <ligand>
        <name>GTP</name>
        <dbReference type="ChEBI" id="CHEBI:37565"/>
    </ligand>
</feature>
<feature type="binding site" evidence="1">
    <location>
        <position position="37"/>
    </location>
    <ligand>
        <name>Mg(2+)</name>
        <dbReference type="ChEBI" id="CHEBI:18420"/>
    </ligand>
</feature>
<feature type="binding site" evidence="1">
    <location>
        <begin position="57"/>
        <end position="61"/>
    </location>
    <ligand>
        <name>GTP</name>
        <dbReference type="ChEBI" id="CHEBI:37565"/>
    </ligand>
</feature>
<feature type="binding site" evidence="1">
    <location>
        <position position="59"/>
    </location>
    <ligand>
        <name>Mg(2+)</name>
        <dbReference type="ChEBI" id="CHEBI:18420"/>
    </ligand>
</feature>
<feature type="binding site" evidence="1">
    <location>
        <begin position="75"/>
        <end position="78"/>
    </location>
    <ligand>
        <name>GTP</name>
        <dbReference type="ChEBI" id="CHEBI:37565"/>
    </ligand>
</feature>
<feature type="binding site" evidence="1">
    <location>
        <begin position="142"/>
        <end position="145"/>
    </location>
    <ligand>
        <name>GTP</name>
        <dbReference type="ChEBI" id="CHEBI:37565"/>
    </ligand>
</feature>
<feature type="binding site" evidence="1">
    <location>
        <begin position="172"/>
        <end position="174"/>
    </location>
    <ligand>
        <name>GTP</name>
        <dbReference type="ChEBI" id="CHEBI:37565"/>
    </ligand>
</feature>
<evidence type="ECO:0000255" key="1">
    <source>
        <dbReference type="HAMAP-Rule" id="MF_00321"/>
    </source>
</evidence>
<dbReference type="EMBL" id="CP001101">
    <property type="protein sequence ID" value="ACE05167.1"/>
    <property type="molecule type" value="Genomic_DNA"/>
</dbReference>
<dbReference type="SMR" id="B3EP28"/>
<dbReference type="STRING" id="331678.Cphamn1_2263"/>
<dbReference type="KEGG" id="cpb:Cphamn1_2263"/>
<dbReference type="eggNOG" id="COG0218">
    <property type="taxonomic scope" value="Bacteria"/>
</dbReference>
<dbReference type="HOGENOM" id="CLU_033732_3_0_10"/>
<dbReference type="OrthoDB" id="9804921at2"/>
<dbReference type="GO" id="GO:0005829">
    <property type="term" value="C:cytosol"/>
    <property type="evidence" value="ECO:0007669"/>
    <property type="project" value="TreeGrafter"/>
</dbReference>
<dbReference type="GO" id="GO:0005525">
    <property type="term" value="F:GTP binding"/>
    <property type="evidence" value="ECO:0007669"/>
    <property type="project" value="UniProtKB-UniRule"/>
</dbReference>
<dbReference type="GO" id="GO:0046872">
    <property type="term" value="F:metal ion binding"/>
    <property type="evidence" value="ECO:0007669"/>
    <property type="project" value="UniProtKB-KW"/>
</dbReference>
<dbReference type="GO" id="GO:0000917">
    <property type="term" value="P:division septum assembly"/>
    <property type="evidence" value="ECO:0007669"/>
    <property type="project" value="UniProtKB-KW"/>
</dbReference>
<dbReference type="CDD" id="cd01876">
    <property type="entry name" value="YihA_EngB"/>
    <property type="match status" value="1"/>
</dbReference>
<dbReference type="Gene3D" id="3.40.50.300">
    <property type="entry name" value="P-loop containing nucleotide triphosphate hydrolases"/>
    <property type="match status" value="1"/>
</dbReference>
<dbReference type="HAMAP" id="MF_00321">
    <property type="entry name" value="GTPase_EngB"/>
    <property type="match status" value="1"/>
</dbReference>
<dbReference type="InterPro" id="IPR030393">
    <property type="entry name" value="G_ENGB_dom"/>
</dbReference>
<dbReference type="InterPro" id="IPR006073">
    <property type="entry name" value="GTP-bd"/>
</dbReference>
<dbReference type="InterPro" id="IPR019987">
    <property type="entry name" value="GTP-bd_ribosome_bio_YsxC"/>
</dbReference>
<dbReference type="InterPro" id="IPR027417">
    <property type="entry name" value="P-loop_NTPase"/>
</dbReference>
<dbReference type="NCBIfam" id="TIGR03598">
    <property type="entry name" value="GTPase_YsxC"/>
    <property type="match status" value="1"/>
</dbReference>
<dbReference type="PANTHER" id="PTHR11649:SF13">
    <property type="entry name" value="ENGB-TYPE G DOMAIN-CONTAINING PROTEIN"/>
    <property type="match status" value="1"/>
</dbReference>
<dbReference type="PANTHER" id="PTHR11649">
    <property type="entry name" value="MSS1/TRME-RELATED GTP-BINDING PROTEIN"/>
    <property type="match status" value="1"/>
</dbReference>
<dbReference type="Pfam" id="PF01926">
    <property type="entry name" value="MMR_HSR1"/>
    <property type="match status" value="1"/>
</dbReference>
<dbReference type="SUPFAM" id="SSF52540">
    <property type="entry name" value="P-loop containing nucleoside triphosphate hydrolases"/>
    <property type="match status" value="1"/>
</dbReference>
<dbReference type="PROSITE" id="PS51706">
    <property type="entry name" value="G_ENGB"/>
    <property type="match status" value="1"/>
</dbReference>
<accession>B3EP28</accession>
<keyword id="KW-0131">Cell cycle</keyword>
<keyword id="KW-0132">Cell division</keyword>
<keyword id="KW-0342">GTP-binding</keyword>
<keyword id="KW-0460">Magnesium</keyword>
<keyword id="KW-0479">Metal-binding</keyword>
<keyword id="KW-0547">Nucleotide-binding</keyword>
<keyword id="KW-0717">Septation</keyword>
<comment type="function">
    <text evidence="1">Necessary for normal cell division and for the maintenance of normal septation.</text>
</comment>
<comment type="cofactor">
    <cofactor evidence="1">
        <name>Mg(2+)</name>
        <dbReference type="ChEBI" id="CHEBI:18420"/>
    </cofactor>
</comment>
<comment type="similarity">
    <text evidence="1">Belongs to the TRAFAC class TrmE-Era-EngA-EngB-Septin-like GTPase superfamily. EngB GTPase family.</text>
</comment>
<name>ENGB_CHLPB</name>
<organism>
    <name type="scientific">Chlorobium phaeobacteroides (strain BS1)</name>
    <dbReference type="NCBI Taxonomy" id="331678"/>
    <lineage>
        <taxon>Bacteria</taxon>
        <taxon>Pseudomonadati</taxon>
        <taxon>Chlorobiota</taxon>
        <taxon>Chlorobiia</taxon>
        <taxon>Chlorobiales</taxon>
        <taxon>Chlorobiaceae</taxon>
        <taxon>Chlorobium/Pelodictyon group</taxon>
        <taxon>Chlorobium</taxon>
    </lineage>
</organism>
<protein>
    <recommendedName>
        <fullName evidence="1">Probable GTP-binding protein EngB</fullName>
    </recommendedName>
</protein>
<proteinExistence type="inferred from homology"/>
<gene>
    <name evidence="1" type="primary">engB</name>
    <name type="ordered locus">Cphamn1_2263</name>
</gene>
<reference key="1">
    <citation type="submission" date="2008-06" db="EMBL/GenBank/DDBJ databases">
        <title>Complete sequence of Chlorobium phaeobacteroides BS1.</title>
        <authorList>
            <consortium name="US DOE Joint Genome Institute"/>
            <person name="Lucas S."/>
            <person name="Copeland A."/>
            <person name="Lapidus A."/>
            <person name="Glavina del Rio T."/>
            <person name="Dalin E."/>
            <person name="Tice H."/>
            <person name="Bruce D."/>
            <person name="Goodwin L."/>
            <person name="Pitluck S."/>
            <person name="Schmutz J."/>
            <person name="Larimer F."/>
            <person name="Land M."/>
            <person name="Hauser L."/>
            <person name="Kyrpides N."/>
            <person name="Ovchinnikova G."/>
            <person name="Li T."/>
            <person name="Liu Z."/>
            <person name="Zhao F."/>
            <person name="Overmann J."/>
            <person name="Bryant D.A."/>
            <person name="Richardson P."/>
        </authorList>
    </citation>
    <scope>NUCLEOTIDE SEQUENCE [LARGE SCALE GENOMIC DNA]</scope>
    <source>
        <strain>BS1</strain>
    </source>
</reference>